<name>PYRB_LEPBP</name>
<sequence length="310" mass="35050">MYAYSHKNILDTLQFSKDDLNYLITKTNRMNALHESGKAFGILHGKLLASLFFEASTRTRMSFEAAMERLGGRLISTVGFQFSSISKGETLYDTMKMIEAYCDIAVIRHPVEGSSRIAAGAVNIPVINAGDGAGQHPTQALLDLYTIVSEKGKIDGLNIAFIGDLKYGRTIHSLINLLRHYPVHLYLISPEELRLPEKYKKNLEGFPMTWEETTDIKAIWDADVAYVTRIQEERFPDHREYEKLKDIYKVNKELVLASKKDTTILHPLPRVNELSTDVDDLPNAAYFRQAKYGVVVRMALLCLSLGVNFD</sequence>
<comment type="function">
    <text evidence="1">Catalyzes the condensation of carbamoyl phosphate and aspartate to form carbamoyl aspartate and inorganic phosphate, the committed step in the de novo pyrimidine nucleotide biosynthesis pathway.</text>
</comment>
<comment type="catalytic activity">
    <reaction evidence="1">
        <text>carbamoyl phosphate + L-aspartate = N-carbamoyl-L-aspartate + phosphate + H(+)</text>
        <dbReference type="Rhea" id="RHEA:20013"/>
        <dbReference type="ChEBI" id="CHEBI:15378"/>
        <dbReference type="ChEBI" id="CHEBI:29991"/>
        <dbReference type="ChEBI" id="CHEBI:32814"/>
        <dbReference type="ChEBI" id="CHEBI:43474"/>
        <dbReference type="ChEBI" id="CHEBI:58228"/>
        <dbReference type="EC" id="2.1.3.2"/>
    </reaction>
</comment>
<comment type="pathway">
    <text evidence="1">Pyrimidine metabolism; UMP biosynthesis via de novo pathway; (S)-dihydroorotate from bicarbonate: step 2/3.</text>
</comment>
<comment type="subunit">
    <text evidence="1">Heterododecamer (2C3:3R2) of six catalytic PyrB chains organized as two trimers (C3), and six regulatory PyrI chains organized as three dimers (R2).</text>
</comment>
<comment type="similarity">
    <text evidence="1">Belongs to the aspartate/ornithine carbamoyltransferase superfamily. ATCase family.</text>
</comment>
<evidence type="ECO:0000255" key="1">
    <source>
        <dbReference type="HAMAP-Rule" id="MF_00001"/>
    </source>
</evidence>
<keyword id="KW-0665">Pyrimidine biosynthesis</keyword>
<keyword id="KW-1185">Reference proteome</keyword>
<keyword id="KW-0808">Transferase</keyword>
<gene>
    <name evidence="1" type="primary">pyrB</name>
    <name type="ordered locus">LEPBI_I1026</name>
</gene>
<accession>B0SMK5</accession>
<feature type="chain" id="PRO_1000088774" description="Aspartate carbamoyltransferase catalytic subunit">
    <location>
        <begin position="1"/>
        <end position="310"/>
    </location>
</feature>
<feature type="binding site" evidence="1">
    <location>
        <position position="58"/>
    </location>
    <ligand>
        <name>carbamoyl phosphate</name>
        <dbReference type="ChEBI" id="CHEBI:58228"/>
    </ligand>
</feature>
<feature type="binding site" evidence="1">
    <location>
        <position position="59"/>
    </location>
    <ligand>
        <name>carbamoyl phosphate</name>
        <dbReference type="ChEBI" id="CHEBI:58228"/>
    </ligand>
</feature>
<feature type="binding site" evidence="1">
    <location>
        <position position="87"/>
    </location>
    <ligand>
        <name>L-aspartate</name>
        <dbReference type="ChEBI" id="CHEBI:29991"/>
    </ligand>
</feature>
<feature type="binding site" evidence="1">
    <location>
        <position position="108"/>
    </location>
    <ligand>
        <name>carbamoyl phosphate</name>
        <dbReference type="ChEBI" id="CHEBI:58228"/>
    </ligand>
</feature>
<feature type="binding site" evidence="1">
    <location>
        <position position="136"/>
    </location>
    <ligand>
        <name>carbamoyl phosphate</name>
        <dbReference type="ChEBI" id="CHEBI:58228"/>
    </ligand>
</feature>
<feature type="binding site" evidence="1">
    <location>
        <position position="139"/>
    </location>
    <ligand>
        <name>carbamoyl phosphate</name>
        <dbReference type="ChEBI" id="CHEBI:58228"/>
    </ligand>
</feature>
<feature type="binding site" evidence="1">
    <location>
        <position position="169"/>
    </location>
    <ligand>
        <name>L-aspartate</name>
        <dbReference type="ChEBI" id="CHEBI:29991"/>
    </ligand>
</feature>
<feature type="binding site" evidence="1">
    <location>
        <position position="229"/>
    </location>
    <ligand>
        <name>L-aspartate</name>
        <dbReference type="ChEBI" id="CHEBI:29991"/>
    </ligand>
</feature>
<feature type="binding site" evidence="1">
    <location>
        <position position="268"/>
    </location>
    <ligand>
        <name>carbamoyl phosphate</name>
        <dbReference type="ChEBI" id="CHEBI:58228"/>
    </ligand>
</feature>
<feature type="binding site" evidence="1">
    <location>
        <position position="269"/>
    </location>
    <ligand>
        <name>carbamoyl phosphate</name>
        <dbReference type="ChEBI" id="CHEBI:58228"/>
    </ligand>
</feature>
<dbReference type="EC" id="2.1.3.2" evidence="1"/>
<dbReference type="EMBL" id="CP000786">
    <property type="protein sequence ID" value="ABZ97149.1"/>
    <property type="molecule type" value="Genomic_DNA"/>
</dbReference>
<dbReference type="RefSeq" id="WP_012388031.1">
    <property type="nucleotide sequence ID" value="NC_010602.1"/>
</dbReference>
<dbReference type="SMR" id="B0SMK5"/>
<dbReference type="STRING" id="456481.LEPBI_I1026"/>
<dbReference type="KEGG" id="lbi:LEPBI_I1026"/>
<dbReference type="HOGENOM" id="CLU_043846_1_2_12"/>
<dbReference type="OrthoDB" id="9802587at2"/>
<dbReference type="BioCyc" id="LBIF456481:LEPBI_RS05035-MONOMER"/>
<dbReference type="UniPathway" id="UPA00070">
    <property type="reaction ID" value="UER00116"/>
</dbReference>
<dbReference type="Proteomes" id="UP000001847">
    <property type="component" value="Chromosome I"/>
</dbReference>
<dbReference type="GO" id="GO:0016597">
    <property type="term" value="F:amino acid binding"/>
    <property type="evidence" value="ECO:0007669"/>
    <property type="project" value="InterPro"/>
</dbReference>
<dbReference type="GO" id="GO:0004070">
    <property type="term" value="F:aspartate carbamoyltransferase activity"/>
    <property type="evidence" value="ECO:0007669"/>
    <property type="project" value="UniProtKB-UniRule"/>
</dbReference>
<dbReference type="GO" id="GO:0006207">
    <property type="term" value="P:'de novo' pyrimidine nucleobase biosynthetic process"/>
    <property type="evidence" value="ECO:0007669"/>
    <property type="project" value="InterPro"/>
</dbReference>
<dbReference type="GO" id="GO:0044205">
    <property type="term" value="P:'de novo' UMP biosynthetic process"/>
    <property type="evidence" value="ECO:0007669"/>
    <property type="project" value="UniProtKB-UniRule"/>
</dbReference>
<dbReference type="GO" id="GO:0006520">
    <property type="term" value="P:amino acid metabolic process"/>
    <property type="evidence" value="ECO:0007669"/>
    <property type="project" value="InterPro"/>
</dbReference>
<dbReference type="FunFam" id="3.40.50.1370:FF:000021">
    <property type="entry name" value="Aspartate carbamoyltransferase"/>
    <property type="match status" value="1"/>
</dbReference>
<dbReference type="Gene3D" id="3.40.50.1370">
    <property type="entry name" value="Aspartate/ornithine carbamoyltransferase"/>
    <property type="match status" value="2"/>
</dbReference>
<dbReference type="HAMAP" id="MF_00001">
    <property type="entry name" value="Asp_carb_tr"/>
    <property type="match status" value="1"/>
</dbReference>
<dbReference type="InterPro" id="IPR006132">
    <property type="entry name" value="Asp/Orn_carbamoyltranf_P-bd"/>
</dbReference>
<dbReference type="InterPro" id="IPR006130">
    <property type="entry name" value="Asp/Orn_carbamoylTrfase"/>
</dbReference>
<dbReference type="InterPro" id="IPR036901">
    <property type="entry name" value="Asp/Orn_carbamoylTrfase_sf"/>
</dbReference>
<dbReference type="InterPro" id="IPR002082">
    <property type="entry name" value="Asp_carbamoyltransf"/>
</dbReference>
<dbReference type="InterPro" id="IPR006131">
    <property type="entry name" value="Asp_carbamoyltransf_Asp/Orn-bd"/>
</dbReference>
<dbReference type="NCBIfam" id="TIGR00670">
    <property type="entry name" value="asp_carb_tr"/>
    <property type="match status" value="1"/>
</dbReference>
<dbReference type="NCBIfam" id="NF002032">
    <property type="entry name" value="PRK00856.1"/>
    <property type="match status" value="1"/>
</dbReference>
<dbReference type="PANTHER" id="PTHR45753:SF6">
    <property type="entry name" value="ASPARTATE CARBAMOYLTRANSFERASE"/>
    <property type="match status" value="1"/>
</dbReference>
<dbReference type="PANTHER" id="PTHR45753">
    <property type="entry name" value="ORNITHINE CARBAMOYLTRANSFERASE, MITOCHONDRIAL"/>
    <property type="match status" value="1"/>
</dbReference>
<dbReference type="Pfam" id="PF00185">
    <property type="entry name" value="OTCace"/>
    <property type="match status" value="1"/>
</dbReference>
<dbReference type="Pfam" id="PF02729">
    <property type="entry name" value="OTCace_N"/>
    <property type="match status" value="1"/>
</dbReference>
<dbReference type="PRINTS" id="PR00100">
    <property type="entry name" value="AOTCASE"/>
</dbReference>
<dbReference type="PRINTS" id="PR00101">
    <property type="entry name" value="ATCASE"/>
</dbReference>
<dbReference type="SUPFAM" id="SSF53671">
    <property type="entry name" value="Aspartate/ornithine carbamoyltransferase"/>
    <property type="match status" value="1"/>
</dbReference>
<dbReference type="PROSITE" id="PS00097">
    <property type="entry name" value="CARBAMOYLTRANSFERASE"/>
    <property type="match status" value="1"/>
</dbReference>
<organism>
    <name type="scientific">Leptospira biflexa serovar Patoc (strain Patoc 1 / ATCC 23582 / Paris)</name>
    <dbReference type="NCBI Taxonomy" id="456481"/>
    <lineage>
        <taxon>Bacteria</taxon>
        <taxon>Pseudomonadati</taxon>
        <taxon>Spirochaetota</taxon>
        <taxon>Spirochaetia</taxon>
        <taxon>Leptospirales</taxon>
        <taxon>Leptospiraceae</taxon>
        <taxon>Leptospira</taxon>
    </lineage>
</organism>
<reference key="1">
    <citation type="journal article" date="2008" name="PLoS ONE">
        <title>Genome sequence of the saprophyte Leptospira biflexa provides insights into the evolution of Leptospira and the pathogenesis of leptospirosis.</title>
        <authorList>
            <person name="Picardeau M."/>
            <person name="Bulach D.M."/>
            <person name="Bouchier C."/>
            <person name="Zuerner R.L."/>
            <person name="Zidane N."/>
            <person name="Wilson P.J."/>
            <person name="Creno S."/>
            <person name="Kuczek E.S."/>
            <person name="Bommezzadri S."/>
            <person name="Davis J.C."/>
            <person name="McGrath A."/>
            <person name="Johnson M.J."/>
            <person name="Boursaux-Eude C."/>
            <person name="Seemann T."/>
            <person name="Rouy Z."/>
            <person name="Coppel R.L."/>
            <person name="Rood J.I."/>
            <person name="Lajus A."/>
            <person name="Davies J.K."/>
            <person name="Medigue C."/>
            <person name="Adler B."/>
        </authorList>
    </citation>
    <scope>NUCLEOTIDE SEQUENCE [LARGE SCALE GENOMIC DNA]</scope>
    <source>
        <strain>Patoc 1 / ATCC 23582 / Paris</strain>
    </source>
</reference>
<proteinExistence type="inferred from homology"/>
<protein>
    <recommendedName>
        <fullName evidence="1">Aspartate carbamoyltransferase catalytic subunit</fullName>
        <ecNumber evidence="1">2.1.3.2</ecNumber>
    </recommendedName>
    <alternativeName>
        <fullName evidence="1">Aspartate transcarbamylase</fullName>
        <shortName evidence="1">ATCase</shortName>
    </alternativeName>
</protein>